<protein>
    <recommendedName>
        <fullName evidence="1">Putative ion-transport protein YfeO</fullName>
    </recommendedName>
</protein>
<name>YFEO_SALSV</name>
<organism>
    <name type="scientific">Salmonella schwarzengrund (strain CVM19633)</name>
    <dbReference type="NCBI Taxonomy" id="439843"/>
    <lineage>
        <taxon>Bacteria</taxon>
        <taxon>Pseudomonadati</taxon>
        <taxon>Pseudomonadota</taxon>
        <taxon>Gammaproteobacteria</taxon>
        <taxon>Enterobacterales</taxon>
        <taxon>Enterobacteriaceae</taxon>
        <taxon>Salmonella</taxon>
    </lineage>
</organism>
<dbReference type="EMBL" id="CP001127">
    <property type="protein sequence ID" value="ACF91108.1"/>
    <property type="molecule type" value="Genomic_DNA"/>
</dbReference>
<dbReference type="RefSeq" id="WP_000468928.1">
    <property type="nucleotide sequence ID" value="NC_011094.1"/>
</dbReference>
<dbReference type="SMR" id="B4TQD9"/>
<dbReference type="KEGG" id="sew:SeSA_A2637"/>
<dbReference type="HOGENOM" id="CLU_053130_0_0_6"/>
<dbReference type="Proteomes" id="UP000001865">
    <property type="component" value="Chromosome"/>
</dbReference>
<dbReference type="GO" id="GO:0005886">
    <property type="term" value="C:plasma membrane"/>
    <property type="evidence" value="ECO:0007669"/>
    <property type="project" value="UniProtKB-SubCell"/>
</dbReference>
<dbReference type="GO" id="GO:0015108">
    <property type="term" value="F:chloride transmembrane transporter activity"/>
    <property type="evidence" value="ECO:0007669"/>
    <property type="project" value="InterPro"/>
</dbReference>
<dbReference type="GO" id="GO:0005216">
    <property type="term" value="F:monoatomic ion channel activity"/>
    <property type="evidence" value="ECO:0007669"/>
    <property type="project" value="UniProtKB-UniRule"/>
</dbReference>
<dbReference type="CDD" id="cd00400">
    <property type="entry name" value="Voltage_gated_ClC"/>
    <property type="match status" value="1"/>
</dbReference>
<dbReference type="FunFam" id="1.10.3080.10:FF:000007">
    <property type="entry name" value="Putative ion-transport protein YfeO"/>
    <property type="match status" value="1"/>
</dbReference>
<dbReference type="Gene3D" id="1.10.3080.10">
    <property type="entry name" value="Clc chloride channel"/>
    <property type="match status" value="1"/>
</dbReference>
<dbReference type="HAMAP" id="MF_01115">
    <property type="entry name" value="CLC_YfeO"/>
    <property type="match status" value="1"/>
</dbReference>
<dbReference type="InterPro" id="IPR022969">
    <property type="entry name" value="Chloride_channel_YfeO"/>
</dbReference>
<dbReference type="InterPro" id="IPR014743">
    <property type="entry name" value="Cl-channel_core"/>
</dbReference>
<dbReference type="InterPro" id="IPR001807">
    <property type="entry name" value="ClC"/>
</dbReference>
<dbReference type="InterPro" id="IPR050368">
    <property type="entry name" value="ClC-type_chloride_channel"/>
</dbReference>
<dbReference type="NCBIfam" id="NF002971">
    <property type="entry name" value="PRK03655.1"/>
    <property type="match status" value="1"/>
</dbReference>
<dbReference type="PANTHER" id="PTHR43427">
    <property type="entry name" value="CHLORIDE CHANNEL PROTEIN CLC-E"/>
    <property type="match status" value="1"/>
</dbReference>
<dbReference type="PANTHER" id="PTHR43427:SF9">
    <property type="entry name" value="ION-TRANSPORT PROTEIN YFEO-RELATED"/>
    <property type="match status" value="1"/>
</dbReference>
<dbReference type="Pfam" id="PF00654">
    <property type="entry name" value="Voltage_CLC"/>
    <property type="match status" value="1"/>
</dbReference>
<dbReference type="PRINTS" id="PR00762">
    <property type="entry name" value="CLCHANNEL"/>
</dbReference>
<dbReference type="SUPFAM" id="SSF81340">
    <property type="entry name" value="Clc chloride channel"/>
    <property type="match status" value="1"/>
</dbReference>
<accession>B4TQD9</accession>
<feature type="chain" id="PRO_1000137222" description="Putative ion-transport protein YfeO">
    <location>
        <begin position="1"/>
        <end position="411"/>
    </location>
</feature>
<feature type="transmembrane region" description="Helical" evidence="1">
    <location>
        <begin position="9"/>
        <end position="29"/>
    </location>
</feature>
<feature type="transmembrane region" description="Helical" evidence="1">
    <location>
        <begin position="54"/>
        <end position="74"/>
    </location>
</feature>
<feature type="transmembrane region" description="Helical" evidence="1">
    <location>
        <begin position="99"/>
        <end position="119"/>
    </location>
</feature>
<feature type="transmembrane region" description="Helical" evidence="1">
    <location>
        <begin position="149"/>
        <end position="169"/>
    </location>
</feature>
<feature type="transmembrane region" description="Helical" evidence="1">
    <location>
        <begin position="186"/>
        <end position="206"/>
    </location>
</feature>
<feature type="transmembrane region" description="Helical" evidence="1">
    <location>
        <begin position="223"/>
        <end position="243"/>
    </location>
</feature>
<feature type="transmembrane region" description="Helical" evidence="1">
    <location>
        <begin position="258"/>
        <end position="278"/>
    </location>
</feature>
<feature type="transmembrane region" description="Helical" evidence="1">
    <location>
        <begin position="296"/>
        <end position="316"/>
    </location>
</feature>
<feature type="transmembrane region" description="Helical" evidence="1">
    <location>
        <begin position="322"/>
        <end position="342"/>
    </location>
</feature>
<feature type="transmembrane region" description="Helical" evidence="1">
    <location>
        <begin position="343"/>
        <end position="363"/>
    </location>
</feature>
<feature type="transmembrane region" description="Helical" evidence="1">
    <location>
        <begin position="386"/>
        <end position="406"/>
    </location>
</feature>
<reference key="1">
    <citation type="journal article" date="2011" name="J. Bacteriol.">
        <title>Comparative genomics of 28 Salmonella enterica isolates: evidence for CRISPR-mediated adaptive sublineage evolution.</title>
        <authorList>
            <person name="Fricke W.F."/>
            <person name="Mammel M.K."/>
            <person name="McDermott P.F."/>
            <person name="Tartera C."/>
            <person name="White D.G."/>
            <person name="Leclerc J.E."/>
            <person name="Ravel J."/>
            <person name="Cebula T.A."/>
        </authorList>
    </citation>
    <scope>NUCLEOTIDE SEQUENCE [LARGE SCALE GENOMIC DNA]</scope>
    <source>
        <strain>CVM19633</strain>
    </source>
</reference>
<proteinExistence type="inferred from homology"/>
<comment type="subcellular location">
    <subcellularLocation>
        <location evidence="1">Cell membrane</location>
        <topology evidence="1">Multi-pass membrane protein</topology>
    </subcellularLocation>
</comment>
<comment type="similarity">
    <text evidence="1">Belongs to the chloride channel (TC 2.A.49) family.</text>
</comment>
<sequence length="411" mass="42942">MFHPRARTMLLLSLPALIIGVASSLVLIASMKVASVFQQFLWQRLPASIGIAYDSPFWIVGMLTLTGIVVGLIIRYSPGHAGPDPAIEPLISMPVSPSALPGLLLALIIGLAGGVSLGPEHPIMTINIALAAAFGSRLFPRITALDWTILASAGTIGALFGTPVAAALIFSQTLSGSNDIPMWDRLFAPLMAAAAGSLTTSLFFHPHFSLPIAHYTQMRLVDIASGAIVAAIAIAAGMVAVWCLPRLHELLHRLKNPVLILGIGGFILGILGVIGGPLTLFKGLDEMQQMAFSQTLGAGDYFTLAAVKLAALVIAAASGFRGGRIFPAVFIGAALGLMLHAHVEAVPAAITVSCAILGLVLVVTRDGWLSLFMAAVVVPDTNLLPLLCIVMLPAWLLLAGKPLLAANRHEP</sequence>
<keyword id="KW-1003">Cell membrane</keyword>
<keyword id="KW-0407">Ion channel</keyword>
<keyword id="KW-0406">Ion transport</keyword>
<keyword id="KW-0472">Membrane</keyword>
<keyword id="KW-0812">Transmembrane</keyword>
<keyword id="KW-1133">Transmembrane helix</keyword>
<keyword id="KW-0813">Transport</keyword>
<gene>
    <name evidence="1" type="primary">yfeO</name>
    <name type="ordered locus">SeSA_A2637</name>
</gene>
<evidence type="ECO:0000255" key="1">
    <source>
        <dbReference type="HAMAP-Rule" id="MF_01115"/>
    </source>
</evidence>